<gene>
    <name evidence="6" type="primary">GLG1</name>
    <name evidence="9" type="ordered locus">PAS_chr4_0847</name>
</gene>
<name>GLG_KOMPG</name>
<accession>C4R941</accession>
<comment type="function">
    <text evidence="2 5">Glycogenin participates in the glycogen biosynthetic process along with glycogen synthase and glycogen branching enzyme (PubMed:38534311). It catalyzes the formation of a short alpha (1,4)-glucosyl chain covalently attached via a glucose 1-O-tyrosyl linkage to internal tyrosine residues and these chains act as primers for the elongation reaction catalyzed by glycogen synthase (By similarity).</text>
</comment>
<comment type="catalytic activity">
    <reaction evidence="2">
        <text>L-tyrosyl-[glycogenin] + UDP-alpha-D-glucose = alpha-D-glucosyl-L-tyrosyl-[glycogenin] + UDP + H(+)</text>
        <dbReference type="Rhea" id="RHEA:23360"/>
        <dbReference type="Rhea" id="RHEA-COMP:14604"/>
        <dbReference type="Rhea" id="RHEA-COMP:14605"/>
        <dbReference type="ChEBI" id="CHEBI:15378"/>
        <dbReference type="ChEBI" id="CHEBI:46858"/>
        <dbReference type="ChEBI" id="CHEBI:58223"/>
        <dbReference type="ChEBI" id="CHEBI:58885"/>
        <dbReference type="ChEBI" id="CHEBI:140573"/>
        <dbReference type="EC" id="2.4.1.186"/>
    </reaction>
</comment>
<comment type="catalytic activity">
    <reaction evidence="2">
        <text>[1,4-alpha-D-glucosyl](n)-L-tyrosyl-[glycogenin] + UDP-alpha-D-glucose = [1,4-alpha-D-glucosyl](n+1)-L-tyrosyl-[glycogenin] + UDP + H(+)</text>
        <dbReference type="Rhea" id="RHEA:56560"/>
        <dbReference type="Rhea" id="RHEA-COMP:14606"/>
        <dbReference type="Rhea" id="RHEA-COMP:14607"/>
        <dbReference type="ChEBI" id="CHEBI:15378"/>
        <dbReference type="ChEBI" id="CHEBI:58223"/>
        <dbReference type="ChEBI" id="CHEBI:58885"/>
        <dbReference type="ChEBI" id="CHEBI:140574"/>
        <dbReference type="EC" id="2.4.1.186"/>
    </reaction>
</comment>
<comment type="cofactor">
    <cofactor evidence="3">
        <name>Mn(2+)</name>
        <dbReference type="ChEBI" id="CHEBI:29035"/>
    </cofactor>
</comment>
<comment type="subcellular location">
    <subcellularLocation>
        <location evidence="5">Cytoplasm</location>
    </subcellularLocation>
    <subcellularLocation>
        <location evidence="5">Vacuole</location>
    </subcellularLocation>
    <text evidence="5 8">Localizes to glycogen granules (glycosomes) in the cytoplasm (Probable). Localizes to the vacuole during nitrogen starvation-induced glycophagy (autophagy of glycosomes) (PubMed:38534311).</text>
</comment>
<comment type="disruption phenotype">
    <text evidence="5">Disrupts glycogen biosynthesis.</text>
</comment>
<comment type="similarity">
    <text evidence="7">Belongs to the glycosyltransferase 8 family. Glycogenin subfamily.</text>
</comment>
<protein>
    <recommendedName>
        <fullName evidence="6">Glycogenin</fullName>
        <ecNumber evidence="2">2.4.1.186</ecNumber>
    </recommendedName>
    <alternativeName>
        <fullName evidence="7">Glycogen synthesis initiator protein 1</fullName>
    </alternativeName>
    <alternativeName>
        <fullName evidence="7">Glycogenin glucosyltransferase 1</fullName>
    </alternativeName>
</protein>
<evidence type="ECO:0000250" key="1">
    <source>
        <dbReference type="UniProtKB" id="P13280"/>
    </source>
</evidence>
<evidence type="ECO:0000250" key="2">
    <source>
        <dbReference type="UniProtKB" id="P36143"/>
    </source>
</evidence>
<evidence type="ECO:0000250" key="3">
    <source>
        <dbReference type="UniProtKB" id="P46976"/>
    </source>
</evidence>
<evidence type="ECO:0000256" key="4">
    <source>
        <dbReference type="SAM" id="MobiDB-lite"/>
    </source>
</evidence>
<evidence type="ECO:0000269" key="5">
    <source>
    </source>
</evidence>
<evidence type="ECO:0000303" key="6">
    <source>
    </source>
</evidence>
<evidence type="ECO:0000305" key="7"/>
<evidence type="ECO:0000305" key="8">
    <source>
    </source>
</evidence>
<evidence type="ECO:0000312" key="9">
    <source>
        <dbReference type="EMBL" id="CAY72116.1"/>
    </source>
</evidence>
<evidence type="ECO:0000312" key="10">
    <source>
        <dbReference type="Proteomes" id="UP000000314"/>
    </source>
</evidence>
<keyword id="KW-0963">Cytoplasm</keyword>
<keyword id="KW-0320">Glycogen biosynthesis</keyword>
<keyword id="KW-0325">Glycoprotein</keyword>
<keyword id="KW-0464">Manganese</keyword>
<keyword id="KW-0479">Metal-binding</keyword>
<keyword id="KW-1185">Reference proteome</keyword>
<keyword id="KW-0808">Transferase</keyword>
<keyword id="KW-0926">Vacuole</keyword>
<reference evidence="10" key="1">
    <citation type="journal article" date="2009" name="Nat. Biotechnol.">
        <title>Genome sequence of the recombinant protein production host Pichia pastoris.</title>
        <authorList>
            <person name="De Schutter K."/>
            <person name="Lin Y.-C."/>
            <person name="Tiels P."/>
            <person name="Van Hecke A."/>
            <person name="Glinka S."/>
            <person name="Weber-Lehmann J."/>
            <person name="Rouze P."/>
            <person name="Van de Peer Y."/>
            <person name="Callewaert N."/>
        </authorList>
    </citation>
    <scope>NUCLEOTIDE SEQUENCE [LARGE SCALE GENOMIC DNA]</scope>
    <source>
        <strain>GS115 / ATCC 20864</strain>
    </source>
</reference>
<reference evidence="7" key="2">
    <citation type="journal article" date="2024" name="Cells">
        <title>Glycogen Granules Are Degraded by Non-Selective Autophagy in Nitrogen-Starved Komagataella phaffii.</title>
        <authorList>
            <person name="Wijewantha N.V."/>
            <person name="Kumar R."/>
            <person name="Nazarko T.Y."/>
        </authorList>
    </citation>
    <scope>FUNCTION</scope>
    <scope>SUBCELLULAR LOCATION</scope>
    <scope>DISRUPTION PHENOTYPE</scope>
    <scope>MUTAGENESIS OF TYR-212</scope>
</reference>
<feature type="chain" id="PRO_0000461101" description="Glycogenin">
    <location>
        <begin position="1"/>
        <end position="409"/>
    </location>
</feature>
<feature type="region of interest" description="Disordered" evidence="4">
    <location>
        <begin position="283"/>
        <end position="303"/>
    </location>
</feature>
<feature type="binding site" evidence="3">
    <location>
        <position position="8"/>
    </location>
    <ligand>
        <name>UDP</name>
        <dbReference type="ChEBI" id="CHEBI:58223"/>
    </ligand>
</feature>
<feature type="binding site" evidence="3">
    <location>
        <position position="8"/>
    </location>
    <ligand>
        <name>UDP-alpha-D-glucose</name>
        <dbReference type="ChEBI" id="CHEBI:58885"/>
    </ligand>
</feature>
<feature type="binding site" evidence="3">
    <location>
        <position position="14"/>
    </location>
    <ligand>
        <name>UDP</name>
        <dbReference type="ChEBI" id="CHEBI:58223"/>
    </ligand>
</feature>
<feature type="binding site" evidence="3">
    <location>
        <position position="14"/>
    </location>
    <ligand>
        <name>UDP-alpha-D-glucose</name>
        <dbReference type="ChEBI" id="CHEBI:58885"/>
    </ligand>
</feature>
<feature type="binding site" evidence="3">
    <location>
        <position position="80"/>
    </location>
    <ligand>
        <name>UDP</name>
        <dbReference type="ChEBI" id="CHEBI:58223"/>
    </ligand>
</feature>
<feature type="binding site" evidence="3">
    <location>
        <position position="80"/>
    </location>
    <ligand>
        <name>UDP-alpha-D-glucose</name>
        <dbReference type="ChEBI" id="CHEBI:58885"/>
    </ligand>
</feature>
<feature type="binding site" evidence="3">
    <location>
        <position position="89"/>
    </location>
    <ligand>
        <name>UDP-alpha-D-glucose</name>
        <dbReference type="ChEBI" id="CHEBI:58885"/>
    </ligand>
</feature>
<feature type="binding site" evidence="3">
    <location>
        <position position="105"/>
    </location>
    <ligand>
        <name>Mn(2+)</name>
        <dbReference type="ChEBI" id="CHEBI:29035"/>
    </ligand>
</feature>
<feature type="binding site" evidence="1">
    <location>
        <position position="105"/>
    </location>
    <ligand>
        <name>UDP</name>
        <dbReference type="ChEBI" id="CHEBI:58223"/>
    </ligand>
</feature>
<feature type="binding site" evidence="3">
    <location>
        <position position="105"/>
    </location>
    <ligand>
        <name>UDP-alpha-D-glucose</name>
        <dbReference type="ChEBI" id="CHEBI:58885"/>
    </ligand>
</feature>
<feature type="binding site" evidence="3">
    <location>
        <position position="107"/>
    </location>
    <ligand>
        <name>Mn(2+)</name>
        <dbReference type="ChEBI" id="CHEBI:29035"/>
    </ligand>
</feature>
<feature type="binding site" evidence="3">
    <location>
        <position position="107"/>
    </location>
    <ligand>
        <name>UDP</name>
        <dbReference type="ChEBI" id="CHEBI:58223"/>
    </ligand>
</feature>
<feature type="binding site" evidence="3">
    <location>
        <position position="107"/>
    </location>
    <ligand>
        <name>UDP-alpha-D-glucose</name>
        <dbReference type="ChEBI" id="CHEBI:58885"/>
    </ligand>
</feature>
<feature type="binding site" evidence="3">
    <location>
        <position position="140"/>
    </location>
    <ligand>
        <name>UDP-alpha-D-glucose</name>
        <dbReference type="ChEBI" id="CHEBI:58885"/>
    </ligand>
</feature>
<feature type="binding site" evidence="3">
    <location>
        <position position="141"/>
    </location>
    <ligand>
        <name>UDP-alpha-D-glucose</name>
        <dbReference type="ChEBI" id="CHEBI:58885"/>
    </ligand>
</feature>
<feature type="binding site" evidence="3">
    <location>
        <position position="169"/>
    </location>
    <ligand>
        <name>UDP-alpha-D-glucose</name>
        <dbReference type="ChEBI" id="CHEBI:58885"/>
    </ligand>
</feature>
<feature type="binding site" evidence="3">
    <location>
        <position position="172"/>
    </location>
    <ligand>
        <name>UDP-alpha-D-glucose</name>
        <dbReference type="ChEBI" id="CHEBI:58885"/>
    </ligand>
</feature>
<feature type="binding site" evidence="3">
    <location>
        <position position="173"/>
    </location>
    <ligand>
        <name>UDP-alpha-D-glucose</name>
        <dbReference type="ChEBI" id="CHEBI:58885"/>
    </ligand>
</feature>
<feature type="binding site" evidence="3">
    <location>
        <position position="229"/>
    </location>
    <ligand>
        <name>Mn(2+)</name>
        <dbReference type="ChEBI" id="CHEBI:29035"/>
    </ligand>
</feature>
<feature type="binding site" evidence="1">
    <location>
        <position position="229"/>
    </location>
    <ligand>
        <name>UDP</name>
        <dbReference type="ChEBI" id="CHEBI:58223"/>
    </ligand>
</feature>
<feature type="binding site" evidence="3">
    <location>
        <position position="232"/>
    </location>
    <ligand>
        <name>UDP</name>
        <dbReference type="ChEBI" id="CHEBI:58223"/>
    </ligand>
</feature>
<feature type="binding site" evidence="3">
    <location>
        <position position="232"/>
    </location>
    <ligand>
        <name>UDP-alpha-D-glucose</name>
        <dbReference type="ChEBI" id="CHEBI:58885"/>
    </ligand>
</feature>
<feature type="binding site" evidence="3">
    <location>
        <position position="235"/>
    </location>
    <ligand>
        <name>UDP</name>
        <dbReference type="ChEBI" id="CHEBI:58223"/>
    </ligand>
</feature>
<feature type="binding site" evidence="3">
    <location>
        <position position="235"/>
    </location>
    <ligand>
        <name>UDP-alpha-D-glucose</name>
        <dbReference type="ChEBI" id="CHEBI:58885"/>
    </ligand>
</feature>
<feature type="site" description="Important for catalytic activity" evidence="1">
    <location>
        <position position="89"/>
    </location>
</feature>
<feature type="glycosylation site" description="O-linked (Glc...) tyrosine" evidence="3">
    <location>
        <position position="212"/>
    </location>
</feature>
<feature type="mutagenesis site" description="Disrupts glycogen biosynthesis." evidence="5">
    <original>Y</original>
    <variation>F</variation>
    <location>
        <position position="212"/>
    </location>
</feature>
<dbReference type="EC" id="2.4.1.186" evidence="2"/>
<dbReference type="EMBL" id="FN392322">
    <property type="protein sequence ID" value="CAY72116.1"/>
    <property type="molecule type" value="Genomic_DNA"/>
</dbReference>
<dbReference type="RefSeq" id="XP_002494295.1">
    <property type="nucleotide sequence ID" value="XM_002494250.1"/>
</dbReference>
<dbReference type="SMR" id="C4R941"/>
<dbReference type="FunCoup" id="C4R941">
    <property type="interactions" value="91"/>
</dbReference>
<dbReference type="STRING" id="644223.C4R941"/>
<dbReference type="CAZy" id="GT8">
    <property type="family name" value="Glycosyltransferase Family 8"/>
</dbReference>
<dbReference type="EnsemblFungi" id="CAY72116">
    <property type="protein sequence ID" value="CAY72116"/>
    <property type="gene ID" value="PAS_chr4_0847"/>
</dbReference>
<dbReference type="GeneID" id="8201246"/>
<dbReference type="KEGG" id="ppa:PAS_chr4_0847"/>
<dbReference type="eggNOG" id="KOG1950">
    <property type="taxonomic scope" value="Eukaryota"/>
</dbReference>
<dbReference type="HOGENOM" id="CLU_017171_4_2_1"/>
<dbReference type="InParanoid" id="C4R941"/>
<dbReference type="OMA" id="WHEVYES"/>
<dbReference type="OrthoDB" id="2014201at2759"/>
<dbReference type="Proteomes" id="UP000000314">
    <property type="component" value="Chromosome 4"/>
</dbReference>
<dbReference type="GO" id="GO:0005737">
    <property type="term" value="C:cytoplasm"/>
    <property type="evidence" value="ECO:0000314"/>
    <property type="project" value="UniProtKB"/>
</dbReference>
<dbReference type="GO" id="GO:0005773">
    <property type="term" value="C:vacuole"/>
    <property type="evidence" value="ECO:0000314"/>
    <property type="project" value="UniProtKB"/>
</dbReference>
<dbReference type="GO" id="GO:0016757">
    <property type="term" value="F:glycosyltransferase activity"/>
    <property type="evidence" value="ECO:0007669"/>
    <property type="project" value="InterPro"/>
</dbReference>
<dbReference type="GO" id="GO:0046872">
    <property type="term" value="F:metal ion binding"/>
    <property type="evidence" value="ECO:0007669"/>
    <property type="project" value="UniProtKB-KW"/>
</dbReference>
<dbReference type="GO" id="GO:0005978">
    <property type="term" value="P:glycogen biosynthetic process"/>
    <property type="evidence" value="ECO:0000315"/>
    <property type="project" value="UniProtKB"/>
</dbReference>
<dbReference type="CDD" id="cd02537">
    <property type="entry name" value="GT8_Glycogenin"/>
    <property type="match status" value="1"/>
</dbReference>
<dbReference type="Gene3D" id="3.90.550.10">
    <property type="entry name" value="Spore Coat Polysaccharide Biosynthesis Protein SpsA, Chain A"/>
    <property type="match status" value="1"/>
</dbReference>
<dbReference type="InterPro" id="IPR002495">
    <property type="entry name" value="Glyco_trans_8"/>
</dbReference>
<dbReference type="InterPro" id="IPR050587">
    <property type="entry name" value="GNT1/Glycosyltrans_8"/>
</dbReference>
<dbReference type="InterPro" id="IPR029044">
    <property type="entry name" value="Nucleotide-diphossugar_trans"/>
</dbReference>
<dbReference type="PANTHER" id="PTHR11183">
    <property type="entry name" value="GLYCOGENIN SUBFAMILY MEMBER"/>
    <property type="match status" value="1"/>
</dbReference>
<dbReference type="Pfam" id="PF01501">
    <property type="entry name" value="Glyco_transf_8"/>
    <property type="match status" value="1"/>
</dbReference>
<dbReference type="SUPFAM" id="SSF53448">
    <property type="entry name" value="Nucleotide-diphospho-sugar transferases"/>
    <property type="match status" value="1"/>
</dbReference>
<proteinExistence type="evidence at protein level"/>
<organism evidence="10">
    <name type="scientific">Komagataella phaffii (strain GS115 / ATCC 20864)</name>
    <name type="common">Yeast</name>
    <name type="synonym">Pichia pastoris</name>
    <dbReference type="NCBI Taxonomy" id="644223"/>
    <lineage>
        <taxon>Eukaryota</taxon>
        <taxon>Fungi</taxon>
        <taxon>Dikarya</taxon>
        <taxon>Ascomycota</taxon>
        <taxon>Saccharomycotina</taxon>
        <taxon>Pichiomycetes</taxon>
        <taxon>Pichiales</taxon>
        <taxon>Pichiaceae</taxon>
        <taxon>Komagataella</taxon>
    </lineage>
</organism>
<sequence length="409" mass="47454">MTEAYISLLIGDGYLPGALYLANRIRQFDNERDLVILVSDISIKVHRLLERFYSKVVVLLPDSKIATSPYNAPELHLLNRPDLENVLNKIHIFHQTHYEKLLYVDLDVLILNDFKGLFDIEVKEWELYAVSDIGWPDYFNSGLMLFKPSANVFRHLLALLTEVPGVSYDGGDQGLINYVFQNKWLRTGDDTKRCGVWYNLSFAFNMTLSNNYESLPSVLRNLTDIKLVHFIGIVKPWMLKPSFVNDFPDGSLDSFVAQWWEQFSSFENGEFLPLVFKNVESERIEEDSHETEEKVDEEVSISEPQDETTDFKYQFGHHSFEEPAPVLDYSTEGEAWKLNEEQLTNQWDVDAPAEPLPVPVEEDEREETKAEAELEELLPDIVQPEPPAPHVFPWEAYNEKPTRVFHDYR</sequence>